<proteinExistence type="inferred from homology"/>
<reference key="1">
    <citation type="journal article" date="2007" name="Science">
        <title>Legumes symbioses: absence of nod genes in photosynthetic bradyrhizobia.</title>
        <authorList>
            <person name="Giraud E."/>
            <person name="Moulin L."/>
            <person name="Vallenet D."/>
            <person name="Barbe V."/>
            <person name="Cytryn E."/>
            <person name="Avarre J.-C."/>
            <person name="Jaubert M."/>
            <person name="Simon D."/>
            <person name="Cartieaux F."/>
            <person name="Prin Y."/>
            <person name="Bena G."/>
            <person name="Hannibal L."/>
            <person name="Fardoux J."/>
            <person name="Kojadinovic M."/>
            <person name="Vuillet L."/>
            <person name="Lajus A."/>
            <person name="Cruveiller S."/>
            <person name="Rouy Z."/>
            <person name="Mangenot S."/>
            <person name="Segurens B."/>
            <person name="Dossat C."/>
            <person name="Franck W.L."/>
            <person name="Chang W.-S."/>
            <person name="Saunders E."/>
            <person name="Bruce D."/>
            <person name="Richardson P."/>
            <person name="Normand P."/>
            <person name="Dreyfus B."/>
            <person name="Pignol D."/>
            <person name="Stacey G."/>
            <person name="Emerich D."/>
            <person name="Vermeglio A."/>
            <person name="Medigue C."/>
            <person name="Sadowsky M."/>
        </authorList>
    </citation>
    <scope>NUCLEOTIDE SEQUENCE [LARGE SCALE GENOMIC DNA]</scope>
    <source>
        <strain>BTAi1 / ATCC BAA-1182</strain>
    </source>
</reference>
<comment type="function">
    <text evidence="1">Transport of potassium into the cell. Likely operates as a K(+):H(+) symporter.</text>
</comment>
<comment type="catalytic activity">
    <reaction evidence="1">
        <text>K(+)(in) + H(+)(in) = K(+)(out) + H(+)(out)</text>
        <dbReference type="Rhea" id="RHEA:28490"/>
        <dbReference type="ChEBI" id="CHEBI:15378"/>
        <dbReference type="ChEBI" id="CHEBI:29103"/>
    </reaction>
    <physiologicalReaction direction="right-to-left" evidence="1">
        <dbReference type="Rhea" id="RHEA:28492"/>
    </physiologicalReaction>
</comment>
<comment type="subcellular location">
    <subcellularLocation>
        <location evidence="1">Cell inner membrane</location>
        <topology evidence="1">Multi-pass membrane protein</topology>
    </subcellularLocation>
</comment>
<comment type="similarity">
    <text evidence="1">Belongs to the HAK/KUP transporter (TC 2.A.72) family.</text>
</comment>
<accession>A5ESW9</accession>
<gene>
    <name evidence="1" type="primary">kup4</name>
    <name type="ordered locus">BBta_7401</name>
</gene>
<organism>
    <name type="scientific">Bradyrhizobium sp. (strain BTAi1 / ATCC BAA-1182)</name>
    <dbReference type="NCBI Taxonomy" id="288000"/>
    <lineage>
        <taxon>Bacteria</taxon>
        <taxon>Pseudomonadati</taxon>
        <taxon>Pseudomonadota</taxon>
        <taxon>Alphaproteobacteria</taxon>
        <taxon>Hyphomicrobiales</taxon>
        <taxon>Nitrobacteraceae</taxon>
        <taxon>Bradyrhizobium</taxon>
    </lineage>
</organism>
<protein>
    <recommendedName>
        <fullName evidence="1">Probable potassium transport system protein Kup 4</fullName>
    </recommendedName>
</protein>
<dbReference type="EMBL" id="CP000494">
    <property type="protein sequence ID" value="ABQ39263.1"/>
    <property type="molecule type" value="Genomic_DNA"/>
</dbReference>
<dbReference type="RefSeq" id="WP_004624790.1">
    <property type="nucleotide sequence ID" value="NC_009485.1"/>
</dbReference>
<dbReference type="SMR" id="A5ESW9"/>
<dbReference type="STRING" id="288000.BBta_7401"/>
<dbReference type="KEGG" id="bbt:BBta_7401"/>
<dbReference type="eggNOG" id="COG3158">
    <property type="taxonomic scope" value="Bacteria"/>
</dbReference>
<dbReference type="HOGENOM" id="CLU_008142_4_2_5"/>
<dbReference type="OrthoDB" id="9805577at2"/>
<dbReference type="Proteomes" id="UP000000246">
    <property type="component" value="Chromosome"/>
</dbReference>
<dbReference type="GO" id="GO:0005886">
    <property type="term" value="C:plasma membrane"/>
    <property type="evidence" value="ECO:0007669"/>
    <property type="project" value="UniProtKB-SubCell"/>
</dbReference>
<dbReference type="GO" id="GO:0015079">
    <property type="term" value="F:potassium ion transmembrane transporter activity"/>
    <property type="evidence" value="ECO:0007669"/>
    <property type="project" value="UniProtKB-UniRule"/>
</dbReference>
<dbReference type="GO" id="GO:0015293">
    <property type="term" value="F:symporter activity"/>
    <property type="evidence" value="ECO:0007669"/>
    <property type="project" value="UniProtKB-UniRule"/>
</dbReference>
<dbReference type="HAMAP" id="MF_01522">
    <property type="entry name" value="Kup"/>
    <property type="match status" value="1"/>
</dbReference>
<dbReference type="InterPro" id="IPR003855">
    <property type="entry name" value="K+_transporter"/>
</dbReference>
<dbReference type="InterPro" id="IPR053952">
    <property type="entry name" value="K_trans_C"/>
</dbReference>
<dbReference type="InterPro" id="IPR053951">
    <property type="entry name" value="K_trans_N"/>
</dbReference>
<dbReference type="InterPro" id="IPR023051">
    <property type="entry name" value="Kup"/>
</dbReference>
<dbReference type="PANTHER" id="PTHR30540:SF79">
    <property type="entry name" value="LOW AFFINITY POTASSIUM TRANSPORT SYSTEM PROTEIN KUP"/>
    <property type="match status" value="1"/>
</dbReference>
<dbReference type="PANTHER" id="PTHR30540">
    <property type="entry name" value="OSMOTIC STRESS POTASSIUM TRANSPORTER"/>
    <property type="match status" value="1"/>
</dbReference>
<dbReference type="Pfam" id="PF02705">
    <property type="entry name" value="K_trans"/>
    <property type="match status" value="1"/>
</dbReference>
<dbReference type="Pfam" id="PF22776">
    <property type="entry name" value="K_trans_C"/>
    <property type="match status" value="1"/>
</dbReference>
<name>KUP4_BRASB</name>
<keyword id="KW-0997">Cell inner membrane</keyword>
<keyword id="KW-1003">Cell membrane</keyword>
<keyword id="KW-0406">Ion transport</keyword>
<keyword id="KW-0472">Membrane</keyword>
<keyword id="KW-0630">Potassium</keyword>
<keyword id="KW-0633">Potassium transport</keyword>
<keyword id="KW-1185">Reference proteome</keyword>
<keyword id="KW-0769">Symport</keyword>
<keyword id="KW-0812">Transmembrane</keyword>
<keyword id="KW-1133">Transmembrane helix</keyword>
<keyword id="KW-0813">Transport</keyword>
<sequence>MLRATALHEWLMTPTVAQDVSTRTREPQHWAALGALGIVYGDLGTSPLYTLQTVVQATGGHFTTASALGILSLLVWTLIITISIKYCLFVMRADNHGEGGILALMSLVGANRFKGTAKILAVMGLLGAALLYGDGVITPAISVLSALEGVNVVTGSLKPFVMPAAVAILIVFFAAQRFGTARIGAAFGPIMLLWFLVIAVLGLTGIVRNPSVLTALDPRHAIGFLAHSGGNGMLVLGGVFLCITGGEALYADMGHFGPGPIRLSWYAIVLPSLLLSYAGQTALLIQKGTIEGNPFFQLCPTWGVYPLVFLAMIATIIASQSIITGSFSMTRQAMQLGWLPGFHIRQTSDKVYGQIYVPVVNWMMMVATIGITIAFGSSDRLAGAYGTAVSTTMLLTTCLLFTAMRKTWRWPLAVSILIAGLFLIVDVGFFGANLLKIAEGGWLPLTFGALVFFLMLTWRSGIDAVRESLAQASEAPERFVADLAAGKVPRVPGTAIFLTRTYQKIPPLLIDHVKHMGALHQSVIALTILFEESPRIDDEERCGVEKIADGIWRVTMRFGFVEIPDLTAALKRVKGLDPSIDLDHAIYFATRDIIVARAGSSLFAHWRLPVFAFLYRNAVKVVDRFSLPPDRVVEIARQIEL</sequence>
<feature type="chain" id="PRO_0000296761" description="Probable potassium transport system protein Kup 4">
    <location>
        <begin position="1"/>
        <end position="641"/>
    </location>
</feature>
<feature type="transmembrane region" description="Helical" evidence="1">
    <location>
        <begin position="31"/>
        <end position="51"/>
    </location>
</feature>
<feature type="transmembrane region" description="Helical" evidence="1">
    <location>
        <begin position="64"/>
        <end position="84"/>
    </location>
</feature>
<feature type="transmembrane region" description="Helical" evidence="1">
    <location>
        <begin position="119"/>
        <end position="139"/>
    </location>
</feature>
<feature type="transmembrane region" description="Helical" evidence="1">
    <location>
        <begin position="155"/>
        <end position="175"/>
    </location>
</feature>
<feature type="transmembrane region" description="Helical" evidence="1">
    <location>
        <begin position="183"/>
        <end position="203"/>
    </location>
</feature>
<feature type="transmembrane region" description="Helical" evidence="1">
    <location>
        <begin position="221"/>
        <end position="241"/>
    </location>
</feature>
<feature type="transmembrane region" description="Helical" evidence="1">
    <location>
        <begin position="265"/>
        <end position="285"/>
    </location>
</feature>
<feature type="transmembrane region" description="Helical" evidence="1">
    <location>
        <begin position="298"/>
        <end position="318"/>
    </location>
</feature>
<feature type="transmembrane region" description="Helical" evidence="1">
    <location>
        <begin position="355"/>
        <end position="375"/>
    </location>
</feature>
<feature type="transmembrane region" description="Helical" evidence="1">
    <location>
        <begin position="381"/>
        <end position="401"/>
    </location>
</feature>
<feature type="transmembrane region" description="Helical" evidence="1">
    <location>
        <begin position="412"/>
        <end position="432"/>
    </location>
</feature>
<feature type="transmembrane region" description="Helical" evidence="1">
    <location>
        <begin position="437"/>
        <end position="457"/>
    </location>
</feature>
<evidence type="ECO:0000255" key="1">
    <source>
        <dbReference type="HAMAP-Rule" id="MF_01522"/>
    </source>
</evidence>